<keyword id="KW-0963">Cytoplasm</keyword>
<keyword id="KW-0342">GTP-binding</keyword>
<keyword id="KW-0378">Hydrolase</keyword>
<keyword id="KW-0460">Magnesium</keyword>
<keyword id="KW-0479">Metal-binding</keyword>
<keyword id="KW-0547">Nucleotide-binding</keyword>
<evidence type="ECO:0000255" key="1">
    <source>
        <dbReference type="HAMAP-Rule" id="MF_01454"/>
    </source>
</evidence>
<evidence type="ECO:0000255" key="2">
    <source>
        <dbReference type="PROSITE-ProRule" id="PRU01231"/>
    </source>
</evidence>
<evidence type="ECO:0000256" key="3">
    <source>
        <dbReference type="SAM" id="MobiDB-lite"/>
    </source>
</evidence>
<dbReference type="EC" id="3.6.5.-" evidence="1"/>
<dbReference type="EMBL" id="CP000094">
    <property type="protein sequence ID" value="ABA76595.1"/>
    <property type="molecule type" value="Genomic_DNA"/>
</dbReference>
<dbReference type="SMR" id="Q3K6K9"/>
<dbReference type="KEGG" id="pfo:Pfl01_4858"/>
<dbReference type="eggNOG" id="COG0536">
    <property type="taxonomic scope" value="Bacteria"/>
</dbReference>
<dbReference type="HOGENOM" id="CLU_011747_2_0_6"/>
<dbReference type="Proteomes" id="UP000002704">
    <property type="component" value="Chromosome"/>
</dbReference>
<dbReference type="GO" id="GO:0005737">
    <property type="term" value="C:cytoplasm"/>
    <property type="evidence" value="ECO:0007669"/>
    <property type="project" value="UniProtKB-SubCell"/>
</dbReference>
<dbReference type="GO" id="GO:0005525">
    <property type="term" value="F:GTP binding"/>
    <property type="evidence" value="ECO:0007669"/>
    <property type="project" value="UniProtKB-UniRule"/>
</dbReference>
<dbReference type="GO" id="GO:0003924">
    <property type="term" value="F:GTPase activity"/>
    <property type="evidence" value="ECO:0007669"/>
    <property type="project" value="UniProtKB-UniRule"/>
</dbReference>
<dbReference type="GO" id="GO:0000287">
    <property type="term" value="F:magnesium ion binding"/>
    <property type="evidence" value="ECO:0007669"/>
    <property type="project" value="InterPro"/>
</dbReference>
<dbReference type="GO" id="GO:0042254">
    <property type="term" value="P:ribosome biogenesis"/>
    <property type="evidence" value="ECO:0007669"/>
    <property type="project" value="UniProtKB-UniRule"/>
</dbReference>
<dbReference type="CDD" id="cd01898">
    <property type="entry name" value="Obg"/>
    <property type="match status" value="1"/>
</dbReference>
<dbReference type="FunFam" id="2.70.210.12:FF:000001">
    <property type="entry name" value="GTPase Obg"/>
    <property type="match status" value="1"/>
</dbReference>
<dbReference type="FunFam" id="3.40.50.300:FF:000185">
    <property type="entry name" value="GTPase Obg"/>
    <property type="match status" value="1"/>
</dbReference>
<dbReference type="Gene3D" id="2.70.210.12">
    <property type="entry name" value="GTP1/OBG domain"/>
    <property type="match status" value="1"/>
</dbReference>
<dbReference type="Gene3D" id="3.40.50.300">
    <property type="entry name" value="P-loop containing nucleotide triphosphate hydrolases"/>
    <property type="match status" value="1"/>
</dbReference>
<dbReference type="HAMAP" id="MF_01454">
    <property type="entry name" value="GTPase_Obg"/>
    <property type="match status" value="1"/>
</dbReference>
<dbReference type="InterPro" id="IPR031167">
    <property type="entry name" value="G_OBG"/>
</dbReference>
<dbReference type="InterPro" id="IPR006073">
    <property type="entry name" value="GTP-bd"/>
</dbReference>
<dbReference type="InterPro" id="IPR014100">
    <property type="entry name" value="GTP-bd_Obg/CgtA"/>
</dbReference>
<dbReference type="InterPro" id="IPR006074">
    <property type="entry name" value="GTP1-OBG_CS"/>
</dbReference>
<dbReference type="InterPro" id="IPR006169">
    <property type="entry name" value="GTP1_OBG_dom"/>
</dbReference>
<dbReference type="InterPro" id="IPR036726">
    <property type="entry name" value="GTP1_OBG_dom_sf"/>
</dbReference>
<dbReference type="InterPro" id="IPR045086">
    <property type="entry name" value="OBG_GTPase"/>
</dbReference>
<dbReference type="InterPro" id="IPR027417">
    <property type="entry name" value="P-loop_NTPase"/>
</dbReference>
<dbReference type="NCBIfam" id="TIGR02729">
    <property type="entry name" value="Obg_CgtA"/>
    <property type="match status" value="1"/>
</dbReference>
<dbReference type="NCBIfam" id="NF008955">
    <property type="entry name" value="PRK12297.1"/>
    <property type="match status" value="1"/>
</dbReference>
<dbReference type="NCBIfam" id="NF008956">
    <property type="entry name" value="PRK12299.1"/>
    <property type="match status" value="1"/>
</dbReference>
<dbReference type="PANTHER" id="PTHR11702">
    <property type="entry name" value="DEVELOPMENTALLY REGULATED GTP-BINDING PROTEIN-RELATED"/>
    <property type="match status" value="1"/>
</dbReference>
<dbReference type="PANTHER" id="PTHR11702:SF31">
    <property type="entry name" value="MITOCHONDRIAL RIBOSOME-ASSOCIATED GTPASE 2"/>
    <property type="match status" value="1"/>
</dbReference>
<dbReference type="Pfam" id="PF01018">
    <property type="entry name" value="GTP1_OBG"/>
    <property type="match status" value="1"/>
</dbReference>
<dbReference type="Pfam" id="PF01926">
    <property type="entry name" value="MMR_HSR1"/>
    <property type="match status" value="1"/>
</dbReference>
<dbReference type="PIRSF" id="PIRSF002401">
    <property type="entry name" value="GTP_bd_Obg/CgtA"/>
    <property type="match status" value="1"/>
</dbReference>
<dbReference type="PRINTS" id="PR00326">
    <property type="entry name" value="GTP1OBG"/>
</dbReference>
<dbReference type="SUPFAM" id="SSF82051">
    <property type="entry name" value="Obg GTP-binding protein N-terminal domain"/>
    <property type="match status" value="1"/>
</dbReference>
<dbReference type="SUPFAM" id="SSF52540">
    <property type="entry name" value="P-loop containing nucleoside triphosphate hydrolases"/>
    <property type="match status" value="1"/>
</dbReference>
<dbReference type="PROSITE" id="PS51710">
    <property type="entry name" value="G_OBG"/>
    <property type="match status" value="1"/>
</dbReference>
<dbReference type="PROSITE" id="PS00905">
    <property type="entry name" value="GTP1_OBG"/>
    <property type="match status" value="1"/>
</dbReference>
<dbReference type="PROSITE" id="PS51883">
    <property type="entry name" value="OBG"/>
    <property type="match status" value="1"/>
</dbReference>
<gene>
    <name evidence="1" type="primary">obg</name>
    <name type="ordered locus">Pfl01_4858</name>
</gene>
<accession>Q3K6K9</accession>
<protein>
    <recommendedName>
        <fullName evidence="1">GTPase Obg</fullName>
        <ecNumber evidence="1">3.6.5.-</ecNumber>
    </recommendedName>
    <alternativeName>
        <fullName evidence="1">GTP-binding protein Obg</fullName>
    </alternativeName>
</protein>
<proteinExistence type="inferred from homology"/>
<organism>
    <name type="scientific">Pseudomonas fluorescens (strain Pf0-1)</name>
    <dbReference type="NCBI Taxonomy" id="205922"/>
    <lineage>
        <taxon>Bacteria</taxon>
        <taxon>Pseudomonadati</taxon>
        <taxon>Pseudomonadota</taxon>
        <taxon>Gammaproteobacteria</taxon>
        <taxon>Pseudomonadales</taxon>
        <taxon>Pseudomonadaceae</taxon>
        <taxon>Pseudomonas</taxon>
    </lineage>
</organism>
<reference key="1">
    <citation type="journal article" date="2009" name="Genome Biol.">
        <title>Genomic and genetic analyses of diversity and plant interactions of Pseudomonas fluorescens.</title>
        <authorList>
            <person name="Silby M.W."/>
            <person name="Cerdeno-Tarraga A.M."/>
            <person name="Vernikos G.S."/>
            <person name="Giddens S.R."/>
            <person name="Jackson R.W."/>
            <person name="Preston G.M."/>
            <person name="Zhang X.-X."/>
            <person name="Moon C.D."/>
            <person name="Gehrig S.M."/>
            <person name="Godfrey S.A.C."/>
            <person name="Knight C.G."/>
            <person name="Malone J.G."/>
            <person name="Robinson Z."/>
            <person name="Spiers A.J."/>
            <person name="Harris S."/>
            <person name="Challis G.L."/>
            <person name="Yaxley A.M."/>
            <person name="Harris D."/>
            <person name="Seeger K."/>
            <person name="Murphy L."/>
            <person name="Rutter S."/>
            <person name="Squares R."/>
            <person name="Quail M.A."/>
            <person name="Saunders E."/>
            <person name="Mavromatis K."/>
            <person name="Brettin T.S."/>
            <person name="Bentley S.D."/>
            <person name="Hothersall J."/>
            <person name="Stephens E."/>
            <person name="Thomas C.M."/>
            <person name="Parkhill J."/>
            <person name="Levy S.B."/>
            <person name="Rainey P.B."/>
            <person name="Thomson N.R."/>
        </authorList>
    </citation>
    <scope>NUCLEOTIDE SEQUENCE [LARGE SCALE GENOMIC DNA]</scope>
    <source>
        <strain>Pf0-1</strain>
    </source>
</reference>
<sequence>MKFVDEVSIRVKAGDGGNGCMSFRREKFIENGGPNGGDGGDGGSIFMMADENLNTLVDYRYTRHFDAERGSNGGSTDCTGKKGEDLILRVPVGTTVIDSATQEVIGDLTKAGQKLMVVQGGWHGLGNTRFKSSTNRAPRQTTPGKPGEQRDLKLEMKVLADVGLLGLPNAGKSTFIRSVSAAKPKVADYPFTTLVPNLGVVSVDRWKSFVIADIPGLIEGASDGAGLGIRFLKHLARTRLLLHLVDMAPLDESSAPDAAEVIVNELIKFSPSLAERDRWLVLNKCDQILEEEHEARVKEIVDRLEWTGPVYVISAIAKEGTERLTRDIMRYLEDRADRLANDPAYKEELADLDQRIEDEARAQLQALDDKRALRRSGVKSVHDIGDDDWDEEDVDDEDGPEIIYVRD</sequence>
<comment type="function">
    <text evidence="1">An essential GTPase which binds GTP, GDP and possibly (p)ppGpp with moderate affinity, with high nucleotide exchange rates and a fairly low GTP hydrolysis rate. Plays a role in control of the cell cycle, stress response, ribosome biogenesis and in those bacteria that undergo differentiation, in morphogenesis control.</text>
</comment>
<comment type="cofactor">
    <cofactor evidence="1">
        <name>Mg(2+)</name>
        <dbReference type="ChEBI" id="CHEBI:18420"/>
    </cofactor>
</comment>
<comment type="subunit">
    <text evidence="1">Monomer.</text>
</comment>
<comment type="subcellular location">
    <subcellularLocation>
        <location evidence="1">Cytoplasm</location>
    </subcellularLocation>
</comment>
<comment type="similarity">
    <text evidence="1">Belongs to the TRAFAC class OBG-HflX-like GTPase superfamily. OBG GTPase family.</text>
</comment>
<feature type="chain" id="PRO_0000386156" description="GTPase Obg">
    <location>
        <begin position="1"/>
        <end position="407"/>
    </location>
</feature>
<feature type="domain" description="Obg" evidence="2">
    <location>
        <begin position="1"/>
        <end position="159"/>
    </location>
</feature>
<feature type="domain" description="OBG-type G" evidence="1">
    <location>
        <begin position="160"/>
        <end position="333"/>
    </location>
</feature>
<feature type="region of interest" description="Disordered" evidence="3">
    <location>
        <begin position="128"/>
        <end position="148"/>
    </location>
</feature>
<feature type="region of interest" description="Disordered" evidence="3">
    <location>
        <begin position="376"/>
        <end position="407"/>
    </location>
</feature>
<feature type="compositionally biased region" description="Polar residues" evidence="3">
    <location>
        <begin position="129"/>
        <end position="143"/>
    </location>
</feature>
<feature type="compositionally biased region" description="Acidic residues" evidence="3">
    <location>
        <begin position="385"/>
        <end position="400"/>
    </location>
</feature>
<feature type="binding site" evidence="1">
    <location>
        <begin position="166"/>
        <end position="173"/>
    </location>
    <ligand>
        <name>GTP</name>
        <dbReference type="ChEBI" id="CHEBI:37565"/>
    </ligand>
</feature>
<feature type="binding site" evidence="1">
    <location>
        <position position="173"/>
    </location>
    <ligand>
        <name>Mg(2+)</name>
        <dbReference type="ChEBI" id="CHEBI:18420"/>
    </ligand>
</feature>
<feature type="binding site" evidence="1">
    <location>
        <begin position="191"/>
        <end position="195"/>
    </location>
    <ligand>
        <name>GTP</name>
        <dbReference type="ChEBI" id="CHEBI:37565"/>
    </ligand>
</feature>
<feature type="binding site" evidence="1">
    <location>
        <position position="193"/>
    </location>
    <ligand>
        <name>Mg(2+)</name>
        <dbReference type="ChEBI" id="CHEBI:18420"/>
    </ligand>
</feature>
<feature type="binding site" evidence="1">
    <location>
        <begin position="213"/>
        <end position="216"/>
    </location>
    <ligand>
        <name>GTP</name>
        <dbReference type="ChEBI" id="CHEBI:37565"/>
    </ligand>
</feature>
<feature type="binding site" evidence="1">
    <location>
        <begin position="283"/>
        <end position="286"/>
    </location>
    <ligand>
        <name>GTP</name>
        <dbReference type="ChEBI" id="CHEBI:37565"/>
    </ligand>
</feature>
<feature type="binding site" evidence="1">
    <location>
        <begin position="314"/>
        <end position="316"/>
    </location>
    <ligand>
        <name>GTP</name>
        <dbReference type="ChEBI" id="CHEBI:37565"/>
    </ligand>
</feature>
<name>OBG_PSEPF</name>